<comment type="function">
    <text evidence="4">Transcription regulator required for seed dispersal. Involved in the differentiation of all three cell types required for fruit dehiscence. Acts as the key regulator in a network including SHP and ALC that controls specification of the valve margin. Works with ALC, SHP, and FUL to allow differentiation of the lignified valve layer, the spring-loaded mechanism of fruit that promotes opening. Regulates the expression of the YJ80 marker.</text>
</comment>
<comment type="subunit">
    <text evidence="5">Homodimer (Probable). Heterodimer; possibly with ALC.</text>
</comment>
<comment type="interaction">
    <interactant intactId="EBI-4446992">
        <id>O81313</id>
    </interactant>
    <interactant intactId="EBI-1100737">
        <id>Q8L9Y3</id>
        <label>ARR14</label>
    </interactant>
    <organismsDiffer>false</organismsDiffer>
    <experiments>4</experiments>
</comment>
<comment type="interaction">
    <interactant intactId="EBI-4446992">
        <id>O81313</id>
    </interactant>
    <interactant intactId="EBI-25516668">
        <id>Q9LML3</id>
        <label>At1g07210</label>
    </interactant>
    <organismsDiffer>false</organismsDiffer>
    <experiments>3</experiments>
</comment>
<comment type="interaction">
    <interactant intactId="EBI-4446992">
        <id>O81313</id>
    </interactant>
    <interactant intactId="EBI-25518185">
        <id>A0A178W6S0</id>
        <label>At1g51090</label>
    </interactant>
    <organismsDiffer>false</organismsDiffer>
    <experiments>3</experiments>
</comment>
<comment type="interaction">
    <interactant intactId="EBI-4446992">
        <id>O81313</id>
    </interactant>
    <interactant intactId="EBI-25520665">
        <id>Q84K51</id>
        <label>At1g77770</label>
    </interactant>
    <organismsDiffer>false</organismsDiffer>
    <experiments>3</experiments>
</comment>
<comment type="interaction">
    <interactant intactId="EBI-4446992">
        <id>O81313</id>
    </interactant>
    <interactant intactId="EBI-25510857">
        <id>A0A178VY90</id>
        <label>At2g32840</label>
    </interactant>
    <organismsDiffer>false</organismsDiffer>
    <experiments>3</experiments>
</comment>
<comment type="interaction">
    <interactant intactId="EBI-4446992">
        <id>O81313</id>
    </interactant>
    <interactant intactId="EBI-25520727">
        <id>A0A178UA35</id>
        <label>AXX17_At5g50880</label>
    </interactant>
    <organismsDiffer>false</organismsDiffer>
    <experiments>3</experiments>
</comment>
<comment type="interaction">
    <interactant intactId="EBI-4446992">
        <id>O81313</id>
    </interactant>
    <interactant intactId="EBI-4424482">
        <id>Q8H7F6</id>
        <label>GRXS16</label>
    </interactant>
    <organismsDiffer>false</organismsDiffer>
    <experiments>4</experiments>
</comment>
<comment type="interaction">
    <interactant intactId="EBI-4446992">
        <id>O81313</id>
    </interactant>
    <interactant intactId="EBI-1536720">
        <id>Q9SND4</id>
        <label>HEC2</label>
    </interactant>
    <organismsDiffer>false</organismsDiffer>
    <experiments>4</experiments>
</comment>
<comment type="interaction">
    <interactant intactId="EBI-4446992">
        <id>O81313</id>
    </interactant>
    <interactant intactId="EBI-4458346">
        <id>Q84J88</id>
        <label>HIPP36</label>
    </interactant>
    <organismsDiffer>false</organismsDiffer>
    <experiments>3</experiments>
</comment>
<comment type="interaction">
    <interactant intactId="EBI-4446992">
        <id>O81313</id>
    </interactant>
    <interactant intactId="EBI-4431755">
        <id>Q9FWY7</id>
        <label>IMPA6</label>
    </interactant>
    <organismsDiffer>false</organismsDiffer>
    <experiments>3</experiments>
</comment>
<comment type="interaction">
    <interactant intactId="EBI-4446992">
        <id>O81313</id>
    </interactant>
    <interactant intactId="EBI-4435148">
        <id>Q9FNP4</id>
        <label>PIA2</label>
    </interactant>
    <organismsDiffer>false</organismsDiffer>
    <experiments>3</experiments>
</comment>
<comment type="interaction">
    <interactant intactId="EBI-4446992">
        <id>O81313</id>
    </interactant>
    <interactant intactId="EBI-1536703">
        <id>Q9FUA4</id>
        <label>SPT</label>
    </interactant>
    <organismsDiffer>false</organismsDiffer>
    <experiments>7</experiments>
</comment>
<comment type="interaction">
    <interactant intactId="EBI-4446992">
        <id>O81313</id>
    </interactant>
    <interactant intactId="EBI-25512645">
        <id>Q9FLP5</id>
        <label>SUMO3</label>
    </interactant>
    <organismsDiffer>false</organismsDiffer>
    <experiments>3</experiments>
</comment>
<comment type="subcellular location">
    <subcellularLocation>
        <location evidence="5">Nucleus</location>
    </subcellularLocation>
</comment>
<comment type="tissue specificity">
    <text evidence="3 4">After fertilization, it is expressed in stripes about four cells wide at the margins of developing wild-type fruit. Also expressed in the inner valve layer, which becomes lignified later in fruit development. Detected in roots.</text>
</comment>
<comment type="induction">
    <text>By FUL, which restrict its expression to the margins.</text>
</comment>
<dbReference type="EMBL" id="AF069299">
    <property type="protein sequence ID" value="AAC19297.1"/>
    <property type="molecule type" value="Genomic_DNA"/>
</dbReference>
<dbReference type="EMBL" id="AL161471">
    <property type="protein sequence ID" value="CAB80770.1"/>
    <property type="molecule type" value="Genomic_DNA"/>
</dbReference>
<dbReference type="EMBL" id="CP002687">
    <property type="protein sequence ID" value="AEE81825.1"/>
    <property type="molecule type" value="Genomic_DNA"/>
</dbReference>
<dbReference type="EMBL" id="BT029443">
    <property type="protein sequence ID" value="ABK59672.1"/>
    <property type="molecule type" value="mRNA"/>
</dbReference>
<dbReference type="EMBL" id="AF488578">
    <property type="status" value="NOT_ANNOTATED_CDS"/>
    <property type="molecule type" value="mRNA"/>
</dbReference>
<dbReference type="PIR" id="T01340">
    <property type="entry name" value="T01340"/>
</dbReference>
<dbReference type="RefSeq" id="NP_191923.1">
    <property type="nucleotide sequence ID" value="NM_116229.2"/>
</dbReference>
<dbReference type="SMR" id="O81313"/>
<dbReference type="BioGRID" id="13202">
    <property type="interactions" value="15"/>
</dbReference>
<dbReference type="FunCoup" id="O81313">
    <property type="interactions" value="73"/>
</dbReference>
<dbReference type="IntAct" id="O81313">
    <property type="interactions" value="30"/>
</dbReference>
<dbReference type="STRING" id="3702.O81313"/>
<dbReference type="PaxDb" id="3702-AT4G00120.1"/>
<dbReference type="ProteomicsDB" id="228850"/>
<dbReference type="EnsemblPlants" id="AT4G00120.1">
    <property type="protein sequence ID" value="AT4G00120.1"/>
    <property type="gene ID" value="AT4G00120"/>
</dbReference>
<dbReference type="GeneID" id="827911"/>
<dbReference type="Gramene" id="AT4G00120.1">
    <property type="protein sequence ID" value="AT4G00120.1"/>
    <property type="gene ID" value="AT4G00120"/>
</dbReference>
<dbReference type="KEGG" id="ath:AT4G00120"/>
<dbReference type="Araport" id="AT4G00120"/>
<dbReference type="TAIR" id="AT4G00120">
    <property type="gene designation" value="IND"/>
</dbReference>
<dbReference type="eggNOG" id="ENOG502RZ93">
    <property type="taxonomic scope" value="Eukaryota"/>
</dbReference>
<dbReference type="HOGENOM" id="CLU_1398124_0_0_1"/>
<dbReference type="InParanoid" id="O81313"/>
<dbReference type="OMA" id="AMKEMQY"/>
<dbReference type="PhylomeDB" id="O81313"/>
<dbReference type="PRO" id="PR:O81313"/>
<dbReference type="Proteomes" id="UP000006548">
    <property type="component" value="Chromosome 4"/>
</dbReference>
<dbReference type="ExpressionAtlas" id="O81313">
    <property type="expression patterns" value="baseline and differential"/>
</dbReference>
<dbReference type="GO" id="GO:0005634">
    <property type="term" value="C:nucleus"/>
    <property type="evidence" value="ECO:0000314"/>
    <property type="project" value="TAIR"/>
</dbReference>
<dbReference type="GO" id="GO:0003677">
    <property type="term" value="F:DNA binding"/>
    <property type="evidence" value="ECO:0007669"/>
    <property type="project" value="UniProtKB-KW"/>
</dbReference>
<dbReference type="GO" id="GO:0003700">
    <property type="term" value="F:DNA-binding transcription factor activity"/>
    <property type="evidence" value="ECO:0000250"/>
    <property type="project" value="TAIR"/>
</dbReference>
<dbReference type="GO" id="GO:0046983">
    <property type="term" value="F:protein dimerization activity"/>
    <property type="evidence" value="ECO:0007669"/>
    <property type="project" value="InterPro"/>
</dbReference>
<dbReference type="GO" id="GO:0010197">
    <property type="term" value="P:polar nucleus fusion"/>
    <property type="evidence" value="ECO:0000315"/>
    <property type="project" value="TAIR"/>
</dbReference>
<dbReference type="GO" id="GO:0006355">
    <property type="term" value="P:regulation of DNA-templated transcription"/>
    <property type="evidence" value="ECO:0000304"/>
    <property type="project" value="TAIR"/>
</dbReference>
<dbReference type="CDD" id="cd11454">
    <property type="entry name" value="bHLH_AtIND_like"/>
    <property type="match status" value="1"/>
</dbReference>
<dbReference type="Gene3D" id="4.10.280.10">
    <property type="entry name" value="Helix-loop-helix DNA-binding domain"/>
    <property type="match status" value="1"/>
</dbReference>
<dbReference type="InterPro" id="IPR011598">
    <property type="entry name" value="bHLH_dom"/>
</dbReference>
<dbReference type="InterPro" id="IPR036638">
    <property type="entry name" value="HLH_DNA-bd_sf"/>
</dbReference>
<dbReference type="InterPro" id="IPR045843">
    <property type="entry name" value="IND-like"/>
</dbReference>
<dbReference type="PANTHER" id="PTHR45914">
    <property type="entry name" value="TRANSCRIPTION FACTOR HEC3-RELATED"/>
    <property type="match status" value="1"/>
</dbReference>
<dbReference type="PANTHER" id="PTHR45914:SF63">
    <property type="entry name" value="TRANSCRIPTION FACTOR IND"/>
    <property type="match status" value="1"/>
</dbReference>
<dbReference type="Pfam" id="PF00010">
    <property type="entry name" value="HLH"/>
    <property type="match status" value="1"/>
</dbReference>
<dbReference type="SMART" id="SM00353">
    <property type="entry name" value="HLH"/>
    <property type="match status" value="1"/>
</dbReference>
<dbReference type="SUPFAM" id="SSF47459">
    <property type="entry name" value="HLH, helix-loop-helix DNA-binding domain"/>
    <property type="match status" value="1"/>
</dbReference>
<dbReference type="PROSITE" id="PS50888">
    <property type="entry name" value="BHLH"/>
    <property type="match status" value="1"/>
</dbReference>
<name>IND_ARATH</name>
<protein>
    <recommendedName>
        <fullName>Transcription factor IND</fullName>
    </recommendedName>
    <alternativeName>
        <fullName>Basic helix-loop-helix protein 40</fullName>
        <shortName>AtbHLH40</shortName>
        <shortName>bHLH 40</shortName>
    </alternativeName>
    <alternativeName>
        <fullName>Protein INDEHISCENT</fullName>
    </alternativeName>
    <alternativeName>
        <fullName>Transcription factor EN 120</fullName>
    </alternativeName>
    <alternativeName>
        <fullName>bHLH transcription factor bHLH040</fullName>
    </alternativeName>
</protein>
<proteinExistence type="evidence at protein level"/>
<keyword id="KW-0238">DNA-binding</keyword>
<keyword id="KW-0539">Nucleus</keyword>
<keyword id="KW-1185">Reference proteome</keyword>
<keyword id="KW-0804">Transcription</keyword>
<keyword id="KW-0805">Transcription regulation</keyword>
<gene>
    <name type="primary">IND</name>
    <name type="synonym">BHLH40</name>
    <name type="synonym">EN120</name>
    <name type="ordered locus">At4g00120</name>
    <name type="ORF">F6N15.18</name>
</gene>
<accession>O81313</accession>
<accession>A0JQ73</accession>
<reference key="1">
    <citation type="journal article" date="2004" name="Cell">
        <title>Control of fruit patterning in Arabidopsis by INDEHISCENT.</title>
        <authorList>
            <person name="Liljegren S.J."/>
            <person name="Roeder A.H.K."/>
            <person name="Kempin S.A."/>
            <person name="Gremski K."/>
            <person name="Ostergaard L."/>
            <person name="Guimil S."/>
            <person name="Reyes D.K."/>
            <person name="Yanofsky M.F."/>
        </authorList>
    </citation>
    <scope>NUCLEOTIDE SEQUENCE [GENOMIC DNA]</scope>
    <scope>FUNCTION</scope>
    <scope>TISSUE SPECIFICITY</scope>
    <scope>MUTANTS IND-1 AND IND-3</scope>
</reference>
<reference key="2">
    <citation type="journal article" date="1999" name="Nature">
        <title>Sequence and analysis of chromosome 4 of the plant Arabidopsis thaliana.</title>
        <authorList>
            <person name="Mayer K.F.X."/>
            <person name="Schueller C."/>
            <person name="Wambutt R."/>
            <person name="Murphy G."/>
            <person name="Volckaert G."/>
            <person name="Pohl T."/>
            <person name="Duesterhoeft A."/>
            <person name="Stiekema W."/>
            <person name="Entian K.-D."/>
            <person name="Terryn N."/>
            <person name="Harris B."/>
            <person name="Ansorge W."/>
            <person name="Brandt P."/>
            <person name="Grivell L.A."/>
            <person name="Rieger M."/>
            <person name="Weichselgartner M."/>
            <person name="de Simone V."/>
            <person name="Obermaier B."/>
            <person name="Mache R."/>
            <person name="Mueller M."/>
            <person name="Kreis M."/>
            <person name="Delseny M."/>
            <person name="Puigdomenech P."/>
            <person name="Watson M."/>
            <person name="Schmidtheini T."/>
            <person name="Reichert B."/>
            <person name="Portetelle D."/>
            <person name="Perez-Alonso M."/>
            <person name="Boutry M."/>
            <person name="Bancroft I."/>
            <person name="Vos P."/>
            <person name="Hoheisel J."/>
            <person name="Zimmermann W."/>
            <person name="Wedler H."/>
            <person name="Ridley P."/>
            <person name="Langham S.-A."/>
            <person name="McCullagh B."/>
            <person name="Bilham L."/>
            <person name="Robben J."/>
            <person name="van der Schueren J."/>
            <person name="Grymonprez B."/>
            <person name="Chuang Y.-J."/>
            <person name="Vandenbussche F."/>
            <person name="Braeken M."/>
            <person name="Weltjens I."/>
            <person name="Voet M."/>
            <person name="Bastiaens I."/>
            <person name="Aert R."/>
            <person name="Defoor E."/>
            <person name="Weitzenegger T."/>
            <person name="Bothe G."/>
            <person name="Ramsperger U."/>
            <person name="Hilbert H."/>
            <person name="Braun M."/>
            <person name="Holzer E."/>
            <person name="Brandt A."/>
            <person name="Peters S."/>
            <person name="van Staveren M."/>
            <person name="Dirkse W."/>
            <person name="Mooijman P."/>
            <person name="Klein Lankhorst R."/>
            <person name="Rose M."/>
            <person name="Hauf J."/>
            <person name="Koetter P."/>
            <person name="Berneiser S."/>
            <person name="Hempel S."/>
            <person name="Feldpausch M."/>
            <person name="Lamberth S."/>
            <person name="Van den Daele H."/>
            <person name="De Keyser A."/>
            <person name="Buysshaert C."/>
            <person name="Gielen J."/>
            <person name="Villarroel R."/>
            <person name="De Clercq R."/>
            <person name="van Montagu M."/>
            <person name="Rogers J."/>
            <person name="Cronin A."/>
            <person name="Quail M.A."/>
            <person name="Bray-Allen S."/>
            <person name="Clark L."/>
            <person name="Doggett J."/>
            <person name="Hall S."/>
            <person name="Kay M."/>
            <person name="Lennard N."/>
            <person name="McLay K."/>
            <person name="Mayes R."/>
            <person name="Pettett A."/>
            <person name="Rajandream M.A."/>
            <person name="Lyne M."/>
            <person name="Benes V."/>
            <person name="Rechmann S."/>
            <person name="Borkova D."/>
            <person name="Bloecker H."/>
            <person name="Scharfe M."/>
            <person name="Grimm M."/>
            <person name="Loehnert T.-H."/>
            <person name="Dose S."/>
            <person name="de Haan M."/>
            <person name="Maarse A.C."/>
            <person name="Schaefer M."/>
            <person name="Mueller-Auer S."/>
            <person name="Gabel C."/>
            <person name="Fuchs M."/>
            <person name="Fartmann B."/>
            <person name="Granderath K."/>
            <person name="Dauner D."/>
            <person name="Herzl A."/>
            <person name="Neumann S."/>
            <person name="Argiriou A."/>
            <person name="Vitale D."/>
            <person name="Liguori R."/>
            <person name="Piravandi E."/>
            <person name="Massenet O."/>
            <person name="Quigley F."/>
            <person name="Clabauld G."/>
            <person name="Muendlein A."/>
            <person name="Felber R."/>
            <person name="Schnabl S."/>
            <person name="Hiller R."/>
            <person name="Schmidt W."/>
            <person name="Lecharny A."/>
            <person name="Aubourg S."/>
            <person name="Chefdor F."/>
            <person name="Cooke R."/>
            <person name="Berger C."/>
            <person name="Monfort A."/>
            <person name="Casacuberta E."/>
            <person name="Gibbons T."/>
            <person name="Weber N."/>
            <person name="Vandenbol M."/>
            <person name="Bargues M."/>
            <person name="Terol J."/>
            <person name="Torres A."/>
            <person name="Perez-Perez A."/>
            <person name="Purnelle B."/>
            <person name="Bent E."/>
            <person name="Johnson S."/>
            <person name="Tacon D."/>
            <person name="Jesse T."/>
            <person name="Heijnen L."/>
            <person name="Schwarz S."/>
            <person name="Scholler P."/>
            <person name="Heber S."/>
            <person name="Francs P."/>
            <person name="Bielke C."/>
            <person name="Frishman D."/>
            <person name="Haase D."/>
            <person name="Lemcke K."/>
            <person name="Mewes H.-W."/>
            <person name="Stocker S."/>
            <person name="Zaccaria P."/>
            <person name="Bevan M."/>
            <person name="Wilson R.K."/>
            <person name="de la Bastide M."/>
            <person name="Habermann K."/>
            <person name="Parnell L."/>
            <person name="Dedhia N."/>
            <person name="Gnoj L."/>
            <person name="Schutz K."/>
            <person name="Huang E."/>
            <person name="Spiegel L."/>
            <person name="Sekhon M."/>
            <person name="Murray J."/>
            <person name="Sheet P."/>
            <person name="Cordes M."/>
            <person name="Abu-Threideh J."/>
            <person name="Stoneking T."/>
            <person name="Kalicki J."/>
            <person name="Graves T."/>
            <person name="Harmon G."/>
            <person name="Edwards J."/>
            <person name="Latreille P."/>
            <person name="Courtney L."/>
            <person name="Cloud J."/>
            <person name="Abbott A."/>
            <person name="Scott K."/>
            <person name="Johnson D."/>
            <person name="Minx P."/>
            <person name="Bentley D."/>
            <person name="Fulton B."/>
            <person name="Miller N."/>
            <person name="Greco T."/>
            <person name="Kemp K."/>
            <person name="Kramer J."/>
            <person name="Fulton L."/>
            <person name="Mardis E."/>
            <person name="Dante M."/>
            <person name="Pepin K."/>
            <person name="Hillier L.W."/>
            <person name="Nelson J."/>
            <person name="Spieth J."/>
            <person name="Ryan E."/>
            <person name="Andrews S."/>
            <person name="Geisel C."/>
            <person name="Layman D."/>
            <person name="Du H."/>
            <person name="Ali J."/>
            <person name="Berghoff A."/>
            <person name="Jones K."/>
            <person name="Drone K."/>
            <person name="Cotton M."/>
            <person name="Joshu C."/>
            <person name="Antonoiu B."/>
            <person name="Zidanic M."/>
            <person name="Strong C."/>
            <person name="Sun H."/>
            <person name="Lamar B."/>
            <person name="Yordan C."/>
            <person name="Ma P."/>
            <person name="Zhong J."/>
            <person name="Preston R."/>
            <person name="Vil D."/>
            <person name="Shekher M."/>
            <person name="Matero A."/>
            <person name="Shah R."/>
            <person name="Swaby I.K."/>
            <person name="O'Shaughnessy A."/>
            <person name="Rodriguez M."/>
            <person name="Hoffman J."/>
            <person name="Till S."/>
            <person name="Granat S."/>
            <person name="Shohdy N."/>
            <person name="Hasegawa A."/>
            <person name="Hameed A."/>
            <person name="Lodhi M."/>
            <person name="Johnson A."/>
            <person name="Chen E."/>
            <person name="Marra M.A."/>
            <person name="Martienssen R."/>
            <person name="McCombie W.R."/>
        </authorList>
    </citation>
    <scope>NUCLEOTIDE SEQUENCE [LARGE SCALE GENOMIC DNA]</scope>
    <source>
        <strain>cv. Columbia</strain>
    </source>
</reference>
<reference key="3">
    <citation type="journal article" date="2017" name="Plant J.">
        <title>Araport11: a complete reannotation of the Arabidopsis thaliana reference genome.</title>
        <authorList>
            <person name="Cheng C.Y."/>
            <person name="Krishnakumar V."/>
            <person name="Chan A.P."/>
            <person name="Thibaud-Nissen F."/>
            <person name="Schobel S."/>
            <person name="Town C.D."/>
        </authorList>
    </citation>
    <scope>GENOME REANNOTATION</scope>
    <source>
        <strain>cv. Columbia</strain>
    </source>
</reference>
<reference key="4">
    <citation type="submission" date="2006-11" db="EMBL/GenBank/DDBJ databases">
        <title>Arabidopsis ORF clones.</title>
        <authorList>
            <person name="Bautista V.R."/>
            <person name="Kim C.J."/>
            <person name="Chen H."/>
            <person name="Quinitio C."/>
            <person name="Ecker J.R."/>
        </authorList>
    </citation>
    <scope>NUCLEOTIDE SEQUENCE [LARGE SCALE MRNA]</scope>
    <source>
        <strain>cv. Columbia</strain>
    </source>
</reference>
<reference key="5">
    <citation type="journal article" date="2003" name="Mol. Biol. Evol.">
        <title>The basic helix-loop-helix transcription factor family in plants: a genome-wide study of protein structure and functional diversity.</title>
        <authorList>
            <person name="Heim M.A."/>
            <person name="Jakoby M."/>
            <person name="Werber M."/>
            <person name="Martin C."/>
            <person name="Weisshaar B."/>
            <person name="Bailey P.C."/>
        </authorList>
    </citation>
    <scope>NUCLEOTIDE SEQUENCE [MRNA] OF 9-198</scope>
    <scope>TISSUE SPECIFICITY</scope>
    <scope>GENE FAMILY</scope>
    <scope>NOMENCLATURE</scope>
    <source>
        <strain>cv. Columbia</strain>
    </source>
</reference>
<reference key="6">
    <citation type="journal article" date="2003" name="Plant Cell">
        <title>The Arabidopsis basic/helix-loop-helix transcription factor family.</title>
        <authorList>
            <person name="Toledo-Ortiz G."/>
            <person name="Huq E."/>
            <person name="Quail P.H."/>
        </authorList>
    </citation>
    <scope>GENE FAMILY</scope>
</reference>
<reference key="7">
    <citation type="journal article" date="2003" name="Plant Cell">
        <title>Update on the basic helix-loop-helix transcription factor gene family in Arabidopsis thaliana.</title>
        <authorList>
            <person name="Bailey P.C."/>
            <person name="Martin C."/>
            <person name="Toledo-Ortiz G."/>
            <person name="Quail P.H."/>
            <person name="Huq E."/>
            <person name="Heim M.A."/>
            <person name="Jakoby M."/>
            <person name="Werber M."/>
            <person name="Weisshaar B."/>
        </authorList>
    </citation>
    <scope>GENE FAMILY</scope>
    <scope>NOMENCLATURE</scope>
</reference>
<evidence type="ECO:0000255" key="1">
    <source>
        <dbReference type="PROSITE-ProRule" id="PRU00981"/>
    </source>
</evidence>
<evidence type="ECO:0000256" key="2">
    <source>
        <dbReference type="SAM" id="MobiDB-lite"/>
    </source>
</evidence>
<evidence type="ECO:0000269" key="3">
    <source>
    </source>
</evidence>
<evidence type="ECO:0000269" key="4">
    <source>
    </source>
</evidence>
<evidence type="ECO:0000305" key="5"/>
<organism>
    <name type="scientific">Arabidopsis thaliana</name>
    <name type="common">Mouse-ear cress</name>
    <dbReference type="NCBI Taxonomy" id="3702"/>
    <lineage>
        <taxon>Eukaryota</taxon>
        <taxon>Viridiplantae</taxon>
        <taxon>Streptophyta</taxon>
        <taxon>Embryophyta</taxon>
        <taxon>Tracheophyta</taxon>
        <taxon>Spermatophyta</taxon>
        <taxon>Magnoliopsida</taxon>
        <taxon>eudicotyledons</taxon>
        <taxon>Gunneridae</taxon>
        <taxon>Pentapetalae</taxon>
        <taxon>rosids</taxon>
        <taxon>malvids</taxon>
        <taxon>Brassicales</taxon>
        <taxon>Brassicaceae</taxon>
        <taxon>Camelineae</taxon>
        <taxon>Arabidopsis</taxon>
    </lineage>
</organism>
<sequence length="198" mass="22949">MENGMYKKKGVCDSCVSSKSRSNHSPKRSMMEPQPHHLLMDWNKANDLLTQEHAAFLNDPHHLMLDPPPETLIHLDEDEEYDEDMDAMKEMQYMIAVMQPVDIDPATVPKPNRRNVRISDDPQTVVARRRRERISEKIRILKRIVPGGAKMDTASMLDEAIRYTKFLKRQVRILQPHSQIGAPMANPSYLCYYHNSQP</sequence>
<feature type="chain" id="PRO_0000127252" description="Transcription factor IND">
    <location>
        <begin position="1"/>
        <end position="198"/>
    </location>
</feature>
<feature type="domain" description="bHLH" evidence="1">
    <location>
        <begin position="118"/>
        <end position="167"/>
    </location>
</feature>
<feature type="region of interest" description="Disordered" evidence="2">
    <location>
        <begin position="1"/>
        <end position="33"/>
    </location>
</feature>
<feature type="mutagenesis site" description="In ind-3; defects in margin definition, especially at the fruit base.">
    <original>R</original>
    <variation>H</variation>
    <location>
        <position position="128"/>
    </location>
</feature>
<feature type="mutagenesis site" description="In ind-1; defects in margin definition, especially at the fruit base.">
    <original>L</original>
    <variation>F</variation>
    <location>
        <position position="141"/>
    </location>
</feature>